<sequence>MSDVLERVSKIVIEHLDVEAEKVTDKASFIDDLGADSLDNVELVMAFEEEFDIEIPDDAAEHIQTVGDAVKFISEKVG</sequence>
<proteinExistence type="inferred from homology"/>
<gene>
    <name evidence="1" type="primary">acpP</name>
    <name type="ordered locus">Mmar10_1216</name>
</gene>
<feature type="chain" id="PRO_1000066637" description="Acyl carrier protein">
    <location>
        <begin position="1"/>
        <end position="78"/>
    </location>
</feature>
<feature type="domain" description="Carrier" evidence="2">
    <location>
        <begin position="2"/>
        <end position="77"/>
    </location>
</feature>
<feature type="modified residue" description="O-(pantetheine 4'-phosphoryl)serine" evidence="2">
    <location>
        <position position="37"/>
    </location>
</feature>
<reference key="1">
    <citation type="submission" date="2006-08" db="EMBL/GenBank/DDBJ databases">
        <title>Complete sequence of Maricaulis maris MCS10.</title>
        <authorList>
            <consortium name="US DOE Joint Genome Institute"/>
            <person name="Copeland A."/>
            <person name="Lucas S."/>
            <person name="Lapidus A."/>
            <person name="Barry K."/>
            <person name="Detter J.C."/>
            <person name="Glavina del Rio T."/>
            <person name="Hammon N."/>
            <person name="Israni S."/>
            <person name="Dalin E."/>
            <person name="Tice H."/>
            <person name="Pitluck S."/>
            <person name="Saunders E."/>
            <person name="Brettin T."/>
            <person name="Bruce D."/>
            <person name="Han C."/>
            <person name="Tapia R."/>
            <person name="Gilna P."/>
            <person name="Schmutz J."/>
            <person name="Larimer F."/>
            <person name="Land M."/>
            <person name="Hauser L."/>
            <person name="Kyrpides N."/>
            <person name="Mikhailova N."/>
            <person name="Viollier P."/>
            <person name="Stephens C."/>
            <person name="Richardson P."/>
        </authorList>
    </citation>
    <scope>NUCLEOTIDE SEQUENCE [LARGE SCALE GENOMIC DNA]</scope>
    <source>
        <strain>MCS10</strain>
    </source>
</reference>
<dbReference type="EMBL" id="CP000449">
    <property type="protein sequence ID" value="ABI65509.1"/>
    <property type="molecule type" value="Genomic_DNA"/>
</dbReference>
<dbReference type="RefSeq" id="WP_011643156.1">
    <property type="nucleotide sequence ID" value="NC_008347.1"/>
</dbReference>
<dbReference type="SMR" id="Q0AQC8"/>
<dbReference type="STRING" id="394221.Mmar10_1216"/>
<dbReference type="KEGG" id="mmr:Mmar10_1216"/>
<dbReference type="eggNOG" id="COG0236">
    <property type="taxonomic scope" value="Bacteria"/>
</dbReference>
<dbReference type="HOGENOM" id="CLU_108696_5_1_5"/>
<dbReference type="OrthoDB" id="9804551at2"/>
<dbReference type="UniPathway" id="UPA00094"/>
<dbReference type="Proteomes" id="UP000001964">
    <property type="component" value="Chromosome"/>
</dbReference>
<dbReference type="GO" id="GO:0005829">
    <property type="term" value="C:cytosol"/>
    <property type="evidence" value="ECO:0007669"/>
    <property type="project" value="TreeGrafter"/>
</dbReference>
<dbReference type="GO" id="GO:0016020">
    <property type="term" value="C:membrane"/>
    <property type="evidence" value="ECO:0007669"/>
    <property type="project" value="GOC"/>
</dbReference>
<dbReference type="GO" id="GO:0000035">
    <property type="term" value="F:acyl binding"/>
    <property type="evidence" value="ECO:0007669"/>
    <property type="project" value="TreeGrafter"/>
</dbReference>
<dbReference type="GO" id="GO:0000036">
    <property type="term" value="F:acyl carrier activity"/>
    <property type="evidence" value="ECO:0007669"/>
    <property type="project" value="UniProtKB-UniRule"/>
</dbReference>
<dbReference type="GO" id="GO:0009245">
    <property type="term" value="P:lipid A biosynthetic process"/>
    <property type="evidence" value="ECO:0007669"/>
    <property type="project" value="TreeGrafter"/>
</dbReference>
<dbReference type="FunFam" id="1.10.1200.10:FF:000003">
    <property type="entry name" value="Acyl carrier protein"/>
    <property type="match status" value="1"/>
</dbReference>
<dbReference type="Gene3D" id="1.10.1200.10">
    <property type="entry name" value="ACP-like"/>
    <property type="match status" value="1"/>
</dbReference>
<dbReference type="HAMAP" id="MF_01217">
    <property type="entry name" value="Acyl_carrier"/>
    <property type="match status" value="1"/>
</dbReference>
<dbReference type="InterPro" id="IPR003231">
    <property type="entry name" value="ACP"/>
</dbReference>
<dbReference type="InterPro" id="IPR036736">
    <property type="entry name" value="ACP-like_sf"/>
</dbReference>
<dbReference type="InterPro" id="IPR009081">
    <property type="entry name" value="PP-bd_ACP"/>
</dbReference>
<dbReference type="NCBIfam" id="TIGR00517">
    <property type="entry name" value="acyl_carrier"/>
    <property type="match status" value="1"/>
</dbReference>
<dbReference type="NCBIfam" id="NF002148">
    <property type="entry name" value="PRK00982.1-2"/>
    <property type="match status" value="1"/>
</dbReference>
<dbReference type="NCBIfam" id="NF002149">
    <property type="entry name" value="PRK00982.1-3"/>
    <property type="match status" value="1"/>
</dbReference>
<dbReference type="NCBIfam" id="NF002150">
    <property type="entry name" value="PRK00982.1-4"/>
    <property type="match status" value="1"/>
</dbReference>
<dbReference type="NCBIfam" id="NF002151">
    <property type="entry name" value="PRK00982.1-5"/>
    <property type="match status" value="1"/>
</dbReference>
<dbReference type="PANTHER" id="PTHR20863">
    <property type="entry name" value="ACYL CARRIER PROTEIN"/>
    <property type="match status" value="1"/>
</dbReference>
<dbReference type="PANTHER" id="PTHR20863:SF76">
    <property type="entry name" value="CARRIER DOMAIN-CONTAINING PROTEIN"/>
    <property type="match status" value="1"/>
</dbReference>
<dbReference type="Pfam" id="PF00550">
    <property type="entry name" value="PP-binding"/>
    <property type="match status" value="1"/>
</dbReference>
<dbReference type="SUPFAM" id="SSF47336">
    <property type="entry name" value="ACP-like"/>
    <property type="match status" value="1"/>
</dbReference>
<dbReference type="PROSITE" id="PS50075">
    <property type="entry name" value="CARRIER"/>
    <property type="match status" value="1"/>
</dbReference>
<organism>
    <name type="scientific">Maricaulis maris (strain MCS10)</name>
    <name type="common">Caulobacter maris</name>
    <dbReference type="NCBI Taxonomy" id="394221"/>
    <lineage>
        <taxon>Bacteria</taxon>
        <taxon>Pseudomonadati</taxon>
        <taxon>Pseudomonadota</taxon>
        <taxon>Alphaproteobacteria</taxon>
        <taxon>Maricaulales</taxon>
        <taxon>Maricaulaceae</taxon>
        <taxon>Maricaulis</taxon>
    </lineage>
</organism>
<comment type="function">
    <text evidence="1">Carrier of the growing fatty acid chain in fatty acid biosynthesis.</text>
</comment>
<comment type="pathway">
    <text evidence="1">Lipid metabolism; fatty acid biosynthesis.</text>
</comment>
<comment type="subcellular location">
    <subcellularLocation>
        <location evidence="1">Cytoplasm</location>
    </subcellularLocation>
</comment>
<comment type="PTM">
    <text evidence="1">4'-phosphopantetheine is transferred from CoA to a specific serine of apo-ACP by AcpS. This modification is essential for activity because fatty acids are bound in thioester linkage to the sulfhydryl of the prosthetic group.</text>
</comment>
<comment type="similarity">
    <text evidence="1">Belongs to the acyl carrier protein (ACP) family.</text>
</comment>
<protein>
    <recommendedName>
        <fullName evidence="1">Acyl carrier protein</fullName>
        <shortName evidence="1">ACP</shortName>
    </recommendedName>
</protein>
<accession>Q0AQC8</accession>
<keyword id="KW-0963">Cytoplasm</keyword>
<keyword id="KW-0275">Fatty acid biosynthesis</keyword>
<keyword id="KW-0276">Fatty acid metabolism</keyword>
<keyword id="KW-0444">Lipid biosynthesis</keyword>
<keyword id="KW-0443">Lipid metabolism</keyword>
<keyword id="KW-0596">Phosphopantetheine</keyword>
<keyword id="KW-0597">Phosphoprotein</keyword>
<keyword id="KW-1185">Reference proteome</keyword>
<name>ACP_MARMM</name>
<evidence type="ECO:0000255" key="1">
    <source>
        <dbReference type="HAMAP-Rule" id="MF_01217"/>
    </source>
</evidence>
<evidence type="ECO:0000255" key="2">
    <source>
        <dbReference type="PROSITE-ProRule" id="PRU00258"/>
    </source>
</evidence>